<feature type="chain" id="PRO_0000083530" description="CAP-Gly domain-containing linker protein 4">
    <location>
        <begin position="1"/>
        <end position="704"/>
    </location>
</feature>
<feature type="repeat" description="ANK 1">
    <location>
        <begin position="65"/>
        <end position="101"/>
    </location>
</feature>
<feature type="repeat" description="ANK 2">
    <location>
        <begin position="149"/>
        <end position="180"/>
    </location>
</feature>
<feature type="repeat" description="ANK 3">
    <location>
        <begin position="186"/>
        <end position="215"/>
    </location>
</feature>
<feature type="domain" description="CAP-Gly 1" evidence="2">
    <location>
        <begin position="303"/>
        <end position="345"/>
    </location>
</feature>
<feature type="domain" description="CAP-Gly 2" evidence="2">
    <location>
        <begin position="504"/>
        <end position="546"/>
    </location>
</feature>
<feature type="domain" description="CAP-Gly 3" evidence="2">
    <location>
        <begin position="643"/>
        <end position="685"/>
    </location>
</feature>
<feature type="region of interest" description="Disordered" evidence="3">
    <location>
        <begin position="353"/>
        <end position="479"/>
    </location>
</feature>
<feature type="compositionally biased region" description="Low complexity" evidence="3">
    <location>
        <begin position="360"/>
        <end position="371"/>
    </location>
</feature>
<feature type="compositionally biased region" description="Low complexity" evidence="3">
    <location>
        <begin position="423"/>
        <end position="432"/>
    </location>
</feature>
<feature type="compositionally biased region" description="Low complexity" evidence="3">
    <location>
        <begin position="440"/>
        <end position="461"/>
    </location>
</feature>
<feature type="modified residue" description="Phosphoserine" evidence="1">
    <location>
        <position position="556"/>
    </location>
</feature>
<feature type="modified residue" description="Phosphoserine" evidence="6">
    <location>
        <position position="608"/>
    </location>
</feature>
<feature type="splice variant" id="VSP_012973" description="In isoform 3." evidence="4">
    <original>NDK</original>
    <variation>VRD</variation>
    <location>
        <begin position="217"/>
        <end position="219"/>
    </location>
</feature>
<feature type="splice variant" id="VSP_012974" description="In isoform 3." evidence="4">
    <location>
        <begin position="220"/>
        <end position="704"/>
    </location>
</feature>
<feature type="splice variant" id="VSP_012975" description="In isoform 2." evidence="4">
    <location>
        <begin position="341"/>
        <end position="387"/>
    </location>
</feature>
<feature type="splice variant" id="VSP_012976" description="In isoform 2." evidence="4">
    <location>
        <begin position="599"/>
        <end position="704"/>
    </location>
</feature>
<feature type="sequence conflict" description="In Ref. 1; BAC35936." evidence="5" ref="1">
    <original>S</original>
    <variation>Y</variation>
    <location>
        <position position="30"/>
    </location>
</feature>
<feature type="sequence conflict" description="In Ref. 1; BAC35936." evidence="5" ref="1">
    <original>C</original>
    <variation>S</variation>
    <location>
        <position position="44"/>
    </location>
</feature>
<feature type="sequence conflict" description="In Ref. 1; BAC35936." evidence="5" ref="1">
    <original>A</original>
    <variation>S</variation>
    <location>
        <position position="190"/>
    </location>
</feature>
<feature type="sequence conflict" description="In Ref. 1; BAC35936." evidence="5" ref="1">
    <original>Q</original>
    <variation>K</variation>
    <location>
        <position position="495"/>
    </location>
</feature>
<feature type="strand" evidence="7">
    <location>
        <begin position="268"/>
        <end position="270"/>
    </location>
</feature>
<feature type="strand" evidence="7">
    <location>
        <begin position="273"/>
        <end position="275"/>
    </location>
</feature>
<feature type="helix" evidence="7">
    <location>
        <begin position="278"/>
        <end position="281"/>
    </location>
</feature>
<feature type="strand" evidence="7">
    <location>
        <begin position="288"/>
        <end position="291"/>
    </location>
</feature>
<feature type="turn" evidence="7">
    <location>
        <begin position="292"/>
        <end position="294"/>
    </location>
</feature>
<feature type="strand" evidence="7">
    <location>
        <begin position="295"/>
        <end position="304"/>
    </location>
</feature>
<feature type="strand" evidence="7">
    <location>
        <begin position="306"/>
        <end position="308"/>
    </location>
</feature>
<feature type="strand" evidence="7">
    <location>
        <begin position="310"/>
        <end position="320"/>
    </location>
</feature>
<feature type="strand" evidence="7">
    <location>
        <begin position="323"/>
        <end position="328"/>
    </location>
</feature>
<feature type="turn" evidence="7">
    <location>
        <begin position="338"/>
        <end position="340"/>
    </location>
</feature>
<feature type="strand" evidence="7">
    <location>
        <begin position="341"/>
        <end position="345"/>
    </location>
</feature>
<feature type="helix" evidence="7">
    <location>
        <begin position="346"/>
        <end position="348"/>
    </location>
</feature>
<feature type="strand" evidence="7">
    <location>
        <begin position="349"/>
        <end position="354"/>
    </location>
</feature>
<feature type="strand" evidence="8">
    <location>
        <begin position="627"/>
        <end position="633"/>
    </location>
</feature>
<feature type="strand" evidence="8">
    <location>
        <begin position="636"/>
        <end position="639"/>
    </location>
</feature>
<feature type="strand" evidence="8">
    <location>
        <begin position="646"/>
        <end position="656"/>
    </location>
</feature>
<feature type="strand" evidence="8">
    <location>
        <begin position="658"/>
        <end position="660"/>
    </location>
</feature>
<feature type="strand" evidence="8">
    <location>
        <begin position="666"/>
        <end position="668"/>
    </location>
</feature>
<feature type="helix" evidence="8">
    <location>
        <begin position="686"/>
        <end position="688"/>
    </location>
</feature>
<protein>
    <recommendedName>
        <fullName>CAP-Gly domain-containing linker protein 4</fullName>
    </recommendedName>
    <alternativeName>
        <fullName>Restin-like protein 2</fullName>
    </alternativeName>
</protein>
<name>CLIP4_MOUSE</name>
<organism>
    <name type="scientific">Mus musculus</name>
    <name type="common">Mouse</name>
    <dbReference type="NCBI Taxonomy" id="10090"/>
    <lineage>
        <taxon>Eukaryota</taxon>
        <taxon>Metazoa</taxon>
        <taxon>Chordata</taxon>
        <taxon>Craniata</taxon>
        <taxon>Vertebrata</taxon>
        <taxon>Euteleostomi</taxon>
        <taxon>Mammalia</taxon>
        <taxon>Eutheria</taxon>
        <taxon>Euarchontoglires</taxon>
        <taxon>Glires</taxon>
        <taxon>Rodentia</taxon>
        <taxon>Myomorpha</taxon>
        <taxon>Muroidea</taxon>
        <taxon>Muridae</taxon>
        <taxon>Murinae</taxon>
        <taxon>Mus</taxon>
        <taxon>Mus</taxon>
    </lineage>
</organism>
<proteinExistence type="evidence at protein level"/>
<accession>Q8CI96</accession>
<accession>Q8BW09</accession>
<accession>Q921Q4</accession>
<accession>Q9D2S6</accession>
<sequence>MTIEDLPDIPLEGSSLIGRYPFLFTGSDTSVIFSISAAPMPSDCEFSFFDPNDASCQEILFDPKTSVSELFAILRQWVPQVQQNIDIIGNEILKRGCNVNDRDGLTDMTLLHYTCKSGAHGIGDIETAVKFAAQLIDLGADASLRSRWTNMNALHYASYFDVPELIRVILKTSKPKDVDATCSDFNFGTALHIAAHNLCAGAVKTLLELGANPAFRNDKGQIPAEVVPDPVDMPLEMADAAAIAKEIKQMLLDAVPLPCTSAKAVLPNSDHTTSRAMLTSLGLKLGDRVVIAGQKVGTLRFCGTTEFASGQWAGIELDEPEGKNNGSVGRVQYFKCAPKYGIFAPLSKISKLKDGRKTTTHTPSTRATPHARSQKVDVAHFTSRVNSGLTTSKKETASESTLTLPPSEEPKTVAENDAAQPGSMSSSSSSSSLDHKQSYPKKLTTSSGGKKTLSKSPSLPSRASAGLKSSATSAANNSHHEGALHLGERVLVVGQRVGTIKFFGTTNFAPGYWYGIELEKPHGKNDGSVGGVQYFSCSPRYGIFAPPSRVQRLSDSLDTLSEISSNKQNHSYPGFRRSFSTTSASSQKEINRRNAFAKTKTTLRRSWSSSTTAGGLEGTVKLHEGSQVLLTSSNEMATVRYVGPTDFASGIWLGLELRSAKGKNDGAVGDKRYFTCKPNYGVLVRPSRVTYRGISGSKLIDENC</sequence>
<evidence type="ECO:0000250" key="1">
    <source>
        <dbReference type="UniProtKB" id="Q66HD5"/>
    </source>
</evidence>
<evidence type="ECO:0000255" key="2">
    <source>
        <dbReference type="PROSITE-ProRule" id="PRU00045"/>
    </source>
</evidence>
<evidence type="ECO:0000256" key="3">
    <source>
        <dbReference type="SAM" id="MobiDB-lite"/>
    </source>
</evidence>
<evidence type="ECO:0000303" key="4">
    <source>
    </source>
</evidence>
<evidence type="ECO:0000305" key="5"/>
<evidence type="ECO:0007744" key="6">
    <source>
    </source>
</evidence>
<evidence type="ECO:0007829" key="7">
    <source>
        <dbReference type="PDB" id="1WHJ"/>
    </source>
</evidence>
<evidence type="ECO:0007829" key="8">
    <source>
        <dbReference type="PDB" id="1WHK"/>
    </source>
</evidence>
<comment type="alternative products">
    <event type="alternative splicing"/>
    <isoform>
        <id>Q8CI96-1</id>
        <name>1</name>
        <sequence type="displayed"/>
    </isoform>
    <isoform>
        <id>Q8CI96-2</id>
        <name>2</name>
        <sequence type="described" ref="VSP_012975 VSP_012976"/>
    </isoform>
    <isoform>
        <id>Q8CI96-3</id>
        <name>3</name>
        <sequence type="described" ref="VSP_012973 VSP_012974"/>
    </isoform>
</comment>
<dbReference type="EMBL" id="AK018895">
    <property type="protein sequence ID" value="BAB31478.1"/>
    <property type="molecule type" value="mRNA"/>
</dbReference>
<dbReference type="EMBL" id="AK075758">
    <property type="protein sequence ID" value="BAC35936.1"/>
    <property type="molecule type" value="mRNA"/>
</dbReference>
<dbReference type="EMBL" id="BC011280">
    <property type="protein sequence ID" value="AAH11280.1"/>
    <property type="molecule type" value="mRNA"/>
</dbReference>
<dbReference type="EMBL" id="BC035226">
    <property type="protein sequence ID" value="AAH35226.1"/>
    <property type="molecule type" value="mRNA"/>
</dbReference>
<dbReference type="CCDS" id="CCDS37687.1">
    <molecule id="Q8CI96-1"/>
</dbReference>
<dbReference type="CCDS" id="CCDS89149.1">
    <molecule id="Q8CI96-2"/>
</dbReference>
<dbReference type="RefSeq" id="NP_084455.2">
    <molecule id="Q8CI96-1"/>
    <property type="nucleotide sequence ID" value="NM_030179.3"/>
</dbReference>
<dbReference type="RefSeq" id="NP_780587.1">
    <molecule id="Q8CI96-2"/>
    <property type="nucleotide sequence ID" value="NM_175378.1"/>
</dbReference>
<dbReference type="RefSeq" id="XP_006525206.1">
    <molecule id="Q8CI96-1"/>
    <property type="nucleotide sequence ID" value="XM_006525143.5"/>
</dbReference>
<dbReference type="RefSeq" id="XP_006525207.1">
    <molecule id="Q8CI96-1"/>
    <property type="nucleotide sequence ID" value="XM_006525144.4"/>
</dbReference>
<dbReference type="RefSeq" id="XP_006525208.1">
    <molecule id="Q8CI96-1"/>
    <property type="nucleotide sequence ID" value="XM_006525145.5"/>
</dbReference>
<dbReference type="RefSeq" id="XP_006525209.1">
    <molecule id="Q8CI96-1"/>
    <property type="nucleotide sequence ID" value="XM_006525146.1"/>
</dbReference>
<dbReference type="RefSeq" id="XP_006525217.1">
    <molecule id="Q8CI96-2"/>
    <property type="nucleotide sequence ID" value="XM_006525154.4"/>
</dbReference>
<dbReference type="PDB" id="1WHJ">
    <property type="method" value="NMR"/>
    <property type="chains" value="A=266-354"/>
</dbReference>
<dbReference type="PDB" id="1WHK">
    <property type="method" value="NMR"/>
    <property type="chains" value="A=617-694"/>
</dbReference>
<dbReference type="PDBsum" id="1WHJ"/>
<dbReference type="PDBsum" id="1WHK"/>
<dbReference type="SMR" id="Q8CI96"/>
<dbReference type="FunCoup" id="Q8CI96">
    <property type="interactions" value="1242"/>
</dbReference>
<dbReference type="STRING" id="10090.ENSMUSP00000024854"/>
<dbReference type="GlyGen" id="Q8CI96">
    <property type="glycosylation" value="1 site"/>
</dbReference>
<dbReference type="iPTMnet" id="Q8CI96"/>
<dbReference type="PhosphoSitePlus" id="Q8CI96"/>
<dbReference type="jPOST" id="Q8CI96"/>
<dbReference type="PaxDb" id="10090-ENSMUSP00000024854"/>
<dbReference type="ProteomicsDB" id="283521">
    <molecule id="Q8CI96-1"/>
</dbReference>
<dbReference type="ProteomicsDB" id="283522">
    <molecule id="Q8CI96-2"/>
</dbReference>
<dbReference type="ProteomicsDB" id="283523">
    <molecule id="Q8CI96-3"/>
</dbReference>
<dbReference type="Antibodypedia" id="51158">
    <property type="antibodies" value="127 antibodies from 24 providers"/>
</dbReference>
<dbReference type="DNASU" id="78785"/>
<dbReference type="Ensembl" id="ENSMUST00000024854.9">
    <molecule id="Q8CI96-1"/>
    <property type="protein sequence ID" value="ENSMUSP00000024854.8"/>
    <property type="gene ID" value="ENSMUSG00000024059.11"/>
</dbReference>
<dbReference type="Ensembl" id="ENSMUST00000229952.2">
    <molecule id="Q8CI96-2"/>
    <property type="protein sequence ID" value="ENSMUSP00000155140.2"/>
    <property type="gene ID" value="ENSMUSG00000024059.11"/>
</dbReference>
<dbReference type="Ensembl" id="ENSMUST00000230427.2">
    <molecule id="Q8CI96-3"/>
    <property type="protein sequence ID" value="ENSMUSP00000155130.2"/>
    <property type="gene ID" value="ENSMUSG00000024059.11"/>
</dbReference>
<dbReference type="GeneID" id="78785"/>
<dbReference type="KEGG" id="mmu:78785"/>
<dbReference type="UCSC" id="uc008dmw.2">
    <molecule id="Q8CI96-3"/>
    <property type="organism name" value="mouse"/>
</dbReference>
<dbReference type="UCSC" id="uc008dmx.2">
    <molecule id="Q8CI96-1"/>
    <property type="organism name" value="mouse"/>
</dbReference>
<dbReference type="UCSC" id="uc012awx.1">
    <molecule id="Q8CI96-2"/>
    <property type="organism name" value="mouse"/>
</dbReference>
<dbReference type="AGR" id="MGI:1919100"/>
<dbReference type="CTD" id="79745"/>
<dbReference type="MGI" id="MGI:1919100">
    <property type="gene designation" value="Clip4"/>
</dbReference>
<dbReference type="VEuPathDB" id="HostDB:ENSMUSG00000024059"/>
<dbReference type="eggNOG" id="KOG0241">
    <property type="taxonomic scope" value="Eukaryota"/>
</dbReference>
<dbReference type="eggNOG" id="KOG4568">
    <property type="taxonomic scope" value="Eukaryota"/>
</dbReference>
<dbReference type="GeneTree" id="ENSGT00940000157706"/>
<dbReference type="HOGENOM" id="CLU_023687_1_0_1"/>
<dbReference type="InParanoid" id="Q8CI96"/>
<dbReference type="OMA" id="FTCKTNH"/>
<dbReference type="OrthoDB" id="2130750at2759"/>
<dbReference type="PhylomeDB" id="Q8CI96"/>
<dbReference type="TreeFam" id="TF326096"/>
<dbReference type="BioGRID-ORCS" id="78785">
    <property type="hits" value="0 hits in 77 CRISPR screens"/>
</dbReference>
<dbReference type="ChiTaRS" id="Clip4">
    <property type="organism name" value="mouse"/>
</dbReference>
<dbReference type="EvolutionaryTrace" id="Q8CI96"/>
<dbReference type="PRO" id="PR:Q8CI96"/>
<dbReference type="Proteomes" id="UP000000589">
    <property type="component" value="Chromosome 17"/>
</dbReference>
<dbReference type="RNAct" id="Q8CI96">
    <property type="molecule type" value="protein"/>
</dbReference>
<dbReference type="Bgee" id="ENSMUSG00000024059">
    <property type="expression patterns" value="Expressed in seminiferous tubule of testis and 229 other cell types or tissues"/>
</dbReference>
<dbReference type="ExpressionAtlas" id="Q8CI96">
    <property type="expression patterns" value="baseline and differential"/>
</dbReference>
<dbReference type="GO" id="GO:0043231">
    <property type="term" value="C:intracellular membrane-bounded organelle"/>
    <property type="evidence" value="ECO:0007669"/>
    <property type="project" value="Ensembl"/>
</dbReference>
<dbReference type="FunFam" id="1.25.40.20:FF:000044">
    <property type="entry name" value="CAP-Gly domain containing linker protein 3"/>
    <property type="match status" value="1"/>
</dbReference>
<dbReference type="FunFam" id="2.30.30.190:FF:000005">
    <property type="entry name" value="CAP-Gly domain containing linker protein 3"/>
    <property type="match status" value="2"/>
</dbReference>
<dbReference type="Gene3D" id="1.25.40.20">
    <property type="entry name" value="Ankyrin repeat-containing domain"/>
    <property type="match status" value="1"/>
</dbReference>
<dbReference type="Gene3D" id="2.30.30.190">
    <property type="entry name" value="CAP Gly-rich-like domain"/>
    <property type="match status" value="3"/>
</dbReference>
<dbReference type="InterPro" id="IPR002110">
    <property type="entry name" value="Ankyrin_rpt"/>
</dbReference>
<dbReference type="InterPro" id="IPR036770">
    <property type="entry name" value="Ankyrin_rpt-contain_sf"/>
</dbReference>
<dbReference type="InterPro" id="IPR036859">
    <property type="entry name" value="CAP-Gly_dom_sf"/>
</dbReference>
<dbReference type="InterPro" id="IPR000938">
    <property type="entry name" value="CAP-Gly_domain"/>
</dbReference>
<dbReference type="PANTHER" id="PTHR18916:SF89">
    <property type="entry name" value="CAP-GLY DOMAIN-CONTAINING PROTEIN"/>
    <property type="match status" value="1"/>
</dbReference>
<dbReference type="PANTHER" id="PTHR18916">
    <property type="entry name" value="DYNACTIN 1-RELATED MICROTUBULE-BINDING"/>
    <property type="match status" value="1"/>
</dbReference>
<dbReference type="Pfam" id="PF12796">
    <property type="entry name" value="Ank_2"/>
    <property type="match status" value="1"/>
</dbReference>
<dbReference type="Pfam" id="PF01302">
    <property type="entry name" value="CAP_GLY"/>
    <property type="match status" value="3"/>
</dbReference>
<dbReference type="SMART" id="SM00248">
    <property type="entry name" value="ANK"/>
    <property type="match status" value="3"/>
</dbReference>
<dbReference type="SMART" id="SM01052">
    <property type="entry name" value="CAP_GLY"/>
    <property type="match status" value="3"/>
</dbReference>
<dbReference type="SUPFAM" id="SSF48403">
    <property type="entry name" value="Ankyrin repeat"/>
    <property type="match status" value="1"/>
</dbReference>
<dbReference type="SUPFAM" id="SSF74924">
    <property type="entry name" value="Cap-Gly domain"/>
    <property type="match status" value="3"/>
</dbReference>
<dbReference type="PROSITE" id="PS50297">
    <property type="entry name" value="ANK_REP_REGION"/>
    <property type="match status" value="1"/>
</dbReference>
<dbReference type="PROSITE" id="PS50088">
    <property type="entry name" value="ANK_REPEAT"/>
    <property type="match status" value="1"/>
</dbReference>
<dbReference type="PROSITE" id="PS00845">
    <property type="entry name" value="CAP_GLY_1"/>
    <property type="match status" value="2"/>
</dbReference>
<dbReference type="PROSITE" id="PS50245">
    <property type="entry name" value="CAP_GLY_2"/>
    <property type="match status" value="3"/>
</dbReference>
<gene>
    <name type="primary">Clip4</name>
    <name type="synonym">Rsnl2</name>
</gene>
<reference key="1">
    <citation type="journal article" date="2005" name="Science">
        <title>The transcriptional landscape of the mammalian genome.</title>
        <authorList>
            <person name="Carninci P."/>
            <person name="Kasukawa T."/>
            <person name="Katayama S."/>
            <person name="Gough J."/>
            <person name="Frith M.C."/>
            <person name="Maeda N."/>
            <person name="Oyama R."/>
            <person name="Ravasi T."/>
            <person name="Lenhard B."/>
            <person name="Wells C."/>
            <person name="Kodzius R."/>
            <person name="Shimokawa K."/>
            <person name="Bajic V.B."/>
            <person name="Brenner S.E."/>
            <person name="Batalov S."/>
            <person name="Forrest A.R."/>
            <person name="Zavolan M."/>
            <person name="Davis M.J."/>
            <person name="Wilming L.G."/>
            <person name="Aidinis V."/>
            <person name="Allen J.E."/>
            <person name="Ambesi-Impiombato A."/>
            <person name="Apweiler R."/>
            <person name="Aturaliya R.N."/>
            <person name="Bailey T.L."/>
            <person name="Bansal M."/>
            <person name="Baxter L."/>
            <person name="Beisel K.W."/>
            <person name="Bersano T."/>
            <person name="Bono H."/>
            <person name="Chalk A.M."/>
            <person name="Chiu K.P."/>
            <person name="Choudhary V."/>
            <person name="Christoffels A."/>
            <person name="Clutterbuck D.R."/>
            <person name="Crowe M.L."/>
            <person name="Dalla E."/>
            <person name="Dalrymple B.P."/>
            <person name="de Bono B."/>
            <person name="Della Gatta G."/>
            <person name="di Bernardo D."/>
            <person name="Down T."/>
            <person name="Engstrom P."/>
            <person name="Fagiolini M."/>
            <person name="Faulkner G."/>
            <person name="Fletcher C.F."/>
            <person name="Fukushima T."/>
            <person name="Furuno M."/>
            <person name="Futaki S."/>
            <person name="Gariboldi M."/>
            <person name="Georgii-Hemming P."/>
            <person name="Gingeras T.R."/>
            <person name="Gojobori T."/>
            <person name="Green R.E."/>
            <person name="Gustincich S."/>
            <person name="Harbers M."/>
            <person name="Hayashi Y."/>
            <person name="Hensch T.K."/>
            <person name="Hirokawa N."/>
            <person name="Hill D."/>
            <person name="Huminiecki L."/>
            <person name="Iacono M."/>
            <person name="Ikeo K."/>
            <person name="Iwama A."/>
            <person name="Ishikawa T."/>
            <person name="Jakt M."/>
            <person name="Kanapin A."/>
            <person name="Katoh M."/>
            <person name="Kawasawa Y."/>
            <person name="Kelso J."/>
            <person name="Kitamura H."/>
            <person name="Kitano H."/>
            <person name="Kollias G."/>
            <person name="Krishnan S.P."/>
            <person name="Kruger A."/>
            <person name="Kummerfeld S.K."/>
            <person name="Kurochkin I.V."/>
            <person name="Lareau L.F."/>
            <person name="Lazarevic D."/>
            <person name="Lipovich L."/>
            <person name="Liu J."/>
            <person name="Liuni S."/>
            <person name="McWilliam S."/>
            <person name="Madan Babu M."/>
            <person name="Madera M."/>
            <person name="Marchionni L."/>
            <person name="Matsuda H."/>
            <person name="Matsuzawa S."/>
            <person name="Miki H."/>
            <person name="Mignone F."/>
            <person name="Miyake S."/>
            <person name="Morris K."/>
            <person name="Mottagui-Tabar S."/>
            <person name="Mulder N."/>
            <person name="Nakano N."/>
            <person name="Nakauchi H."/>
            <person name="Ng P."/>
            <person name="Nilsson R."/>
            <person name="Nishiguchi S."/>
            <person name="Nishikawa S."/>
            <person name="Nori F."/>
            <person name="Ohara O."/>
            <person name="Okazaki Y."/>
            <person name="Orlando V."/>
            <person name="Pang K.C."/>
            <person name="Pavan W.J."/>
            <person name="Pavesi G."/>
            <person name="Pesole G."/>
            <person name="Petrovsky N."/>
            <person name="Piazza S."/>
            <person name="Reed J."/>
            <person name="Reid J.F."/>
            <person name="Ring B.Z."/>
            <person name="Ringwald M."/>
            <person name="Rost B."/>
            <person name="Ruan Y."/>
            <person name="Salzberg S.L."/>
            <person name="Sandelin A."/>
            <person name="Schneider C."/>
            <person name="Schoenbach C."/>
            <person name="Sekiguchi K."/>
            <person name="Semple C.A."/>
            <person name="Seno S."/>
            <person name="Sessa L."/>
            <person name="Sheng Y."/>
            <person name="Shibata Y."/>
            <person name="Shimada H."/>
            <person name="Shimada K."/>
            <person name="Silva D."/>
            <person name="Sinclair B."/>
            <person name="Sperling S."/>
            <person name="Stupka E."/>
            <person name="Sugiura K."/>
            <person name="Sultana R."/>
            <person name="Takenaka Y."/>
            <person name="Taki K."/>
            <person name="Tammoja K."/>
            <person name="Tan S.L."/>
            <person name="Tang S."/>
            <person name="Taylor M.S."/>
            <person name="Tegner J."/>
            <person name="Teichmann S.A."/>
            <person name="Ueda H.R."/>
            <person name="van Nimwegen E."/>
            <person name="Verardo R."/>
            <person name="Wei C.L."/>
            <person name="Yagi K."/>
            <person name="Yamanishi H."/>
            <person name="Zabarovsky E."/>
            <person name="Zhu S."/>
            <person name="Zimmer A."/>
            <person name="Hide W."/>
            <person name="Bult C."/>
            <person name="Grimmond S.M."/>
            <person name="Teasdale R.D."/>
            <person name="Liu E.T."/>
            <person name="Brusic V."/>
            <person name="Quackenbush J."/>
            <person name="Wahlestedt C."/>
            <person name="Mattick J.S."/>
            <person name="Hume D.A."/>
            <person name="Kai C."/>
            <person name="Sasaki D."/>
            <person name="Tomaru Y."/>
            <person name="Fukuda S."/>
            <person name="Kanamori-Katayama M."/>
            <person name="Suzuki M."/>
            <person name="Aoki J."/>
            <person name="Arakawa T."/>
            <person name="Iida J."/>
            <person name="Imamura K."/>
            <person name="Itoh M."/>
            <person name="Kato T."/>
            <person name="Kawaji H."/>
            <person name="Kawagashira N."/>
            <person name="Kawashima T."/>
            <person name="Kojima M."/>
            <person name="Kondo S."/>
            <person name="Konno H."/>
            <person name="Nakano K."/>
            <person name="Ninomiya N."/>
            <person name="Nishio T."/>
            <person name="Okada M."/>
            <person name="Plessy C."/>
            <person name="Shibata K."/>
            <person name="Shiraki T."/>
            <person name="Suzuki S."/>
            <person name="Tagami M."/>
            <person name="Waki K."/>
            <person name="Watahiki A."/>
            <person name="Okamura-Oho Y."/>
            <person name="Suzuki H."/>
            <person name="Kawai J."/>
            <person name="Hayashizaki Y."/>
        </authorList>
    </citation>
    <scope>NUCLEOTIDE SEQUENCE [LARGE SCALE MRNA] (ISOFORMS 2 AND 3)</scope>
    <source>
        <strain>C57BL/6J</strain>
        <tissue>Testis</tissue>
    </source>
</reference>
<reference key="2">
    <citation type="journal article" date="2004" name="Genome Res.">
        <title>The status, quality, and expansion of the NIH full-length cDNA project: the Mammalian Gene Collection (MGC).</title>
        <authorList>
            <consortium name="The MGC Project Team"/>
        </authorList>
    </citation>
    <scope>NUCLEOTIDE SEQUENCE [LARGE SCALE MRNA] (ISOFORM 1)</scope>
    <source>
        <strain>FVB/N</strain>
        <tissue>Mammary gland</tissue>
        <tissue>Salivary gland</tissue>
    </source>
</reference>
<reference key="3">
    <citation type="journal article" date="2010" name="Cell">
        <title>A tissue-specific atlas of mouse protein phosphorylation and expression.</title>
        <authorList>
            <person name="Huttlin E.L."/>
            <person name="Jedrychowski M.P."/>
            <person name="Elias J.E."/>
            <person name="Goswami T."/>
            <person name="Rad R."/>
            <person name="Beausoleil S.A."/>
            <person name="Villen J."/>
            <person name="Haas W."/>
            <person name="Sowa M.E."/>
            <person name="Gygi S.P."/>
        </authorList>
    </citation>
    <scope>PHOSPHORYLATION [LARGE SCALE ANALYSIS] AT SER-608</scope>
    <scope>IDENTIFICATION BY MASS SPECTROMETRY [LARGE SCALE ANALYSIS]</scope>
    <source>
        <tissue>Lung</tissue>
    </source>
</reference>
<reference key="4">
    <citation type="submission" date="2004-11" db="PDB data bank">
        <title>Solution structure of the 1st and the 3rd CAP-Gly domain.</title>
        <authorList>
            <consortium name="RIKEN structural genomics initiative (RSGI)"/>
        </authorList>
    </citation>
    <scope>STRUCTURE BY NMR OF 266-354 AND 617-696</scope>
</reference>
<keyword id="KW-0002">3D-structure</keyword>
<keyword id="KW-0025">Alternative splicing</keyword>
<keyword id="KW-0040">ANK repeat</keyword>
<keyword id="KW-0597">Phosphoprotein</keyword>
<keyword id="KW-1185">Reference proteome</keyword>
<keyword id="KW-0677">Repeat</keyword>